<organism>
    <name type="scientific">Demansia vestigiata</name>
    <name type="common">Lesser black whip snake</name>
    <name type="synonym">Demansia atra</name>
    <dbReference type="NCBI Taxonomy" id="412038"/>
    <lineage>
        <taxon>Eukaryota</taxon>
        <taxon>Metazoa</taxon>
        <taxon>Chordata</taxon>
        <taxon>Craniata</taxon>
        <taxon>Vertebrata</taxon>
        <taxon>Euteleostomi</taxon>
        <taxon>Lepidosauria</taxon>
        <taxon>Squamata</taxon>
        <taxon>Bifurcata</taxon>
        <taxon>Unidentata</taxon>
        <taxon>Episquamata</taxon>
        <taxon>Toxicofera</taxon>
        <taxon>Serpentes</taxon>
        <taxon>Colubroidea</taxon>
        <taxon>Elapidae</taxon>
        <taxon>Notechinae</taxon>
        <taxon>Demansia</taxon>
    </lineage>
</organism>
<evidence type="ECO:0000250" key="1"/>
<evidence type="ECO:0000255" key="2"/>
<evidence type="ECO:0000255" key="3">
    <source>
        <dbReference type="PROSITE-ProRule" id="PRU00031"/>
    </source>
</evidence>
<evidence type="ECO:0000305" key="4"/>
<sequence>MSSGGLLLLLGLLTLWAELTPVSSKDLPEICKLPKEPGPCRSYLLYFYYNSVEHKCQTFHYGGCEGNENRFHTIEECKSTCAE</sequence>
<feature type="signal peptide" evidence="2">
    <location>
        <begin position="1"/>
        <end position="24"/>
    </location>
</feature>
<feature type="chain" id="PRO_5000254117" description="Kunitz-type serine protease inhibitor vestiginin-3">
    <location>
        <begin position="25"/>
        <end position="83"/>
    </location>
</feature>
<feature type="domain" description="BPTI/Kunitz inhibitor" evidence="3">
    <location>
        <begin position="31"/>
        <end position="81"/>
    </location>
</feature>
<feature type="site" description="Reactive bond for trypsin" evidence="1">
    <location>
        <begin position="41"/>
        <end position="42"/>
    </location>
</feature>
<feature type="disulfide bond" evidence="3">
    <location>
        <begin position="31"/>
        <end position="81"/>
    </location>
</feature>
<feature type="disulfide bond" evidence="3">
    <location>
        <begin position="40"/>
        <end position="64"/>
    </location>
</feature>
<feature type="disulfide bond" evidence="3">
    <location>
        <begin position="56"/>
        <end position="77"/>
    </location>
</feature>
<keyword id="KW-0903">Direct protein sequencing</keyword>
<keyword id="KW-1015">Disulfide bond</keyword>
<keyword id="KW-0646">Protease inhibitor</keyword>
<keyword id="KW-0964">Secreted</keyword>
<keyword id="KW-0722">Serine protease inhibitor</keyword>
<keyword id="KW-0732">Signal</keyword>
<dbReference type="EMBL" id="DQ917524">
    <property type="protein sequence ID" value="ABK63553.1"/>
    <property type="molecule type" value="mRNA"/>
</dbReference>
<dbReference type="EMBL" id="EU401860">
    <property type="protein sequence ID" value="ACC77809.1"/>
    <property type="molecule type" value="Genomic_DNA"/>
</dbReference>
<dbReference type="SMR" id="A6MFL3"/>
<dbReference type="GO" id="GO:0005615">
    <property type="term" value="C:extracellular space"/>
    <property type="evidence" value="ECO:0007669"/>
    <property type="project" value="TreeGrafter"/>
</dbReference>
<dbReference type="GO" id="GO:0004867">
    <property type="term" value="F:serine-type endopeptidase inhibitor activity"/>
    <property type="evidence" value="ECO:0007669"/>
    <property type="project" value="UniProtKB-KW"/>
</dbReference>
<dbReference type="FunFam" id="4.10.410.10:FF:000021">
    <property type="entry name" value="Serine protease inhibitor, putative"/>
    <property type="match status" value="1"/>
</dbReference>
<dbReference type="Gene3D" id="4.10.410.10">
    <property type="entry name" value="Pancreatic trypsin inhibitor Kunitz domain"/>
    <property type="match status" value="1"/>
</dbReference>
<dbReference type="InterPro" id="IPR002223">
    <property type="entry name" value="Kunitz_BPTI"/>
</dbReference>
<dbReference type="InterPro" id="IPR036880">
    <property type="entry name" value="Kunitz_BPTI_sf"/>
</dbReference>
<dbReference type="InterPro" id="IPR020901">
    <property type="entry name" value="Prtase_inh_Kunz-CS"/>
</dbReference>
<dbReference type="InterPro" id="IPR050098">
    <property type="entry name" value="TFPI/VKTCI-like"/>
</dbReference>
<dbReference type="PANTHER" id="PTHR10083:SF374">
    <property type="entry name" value="BPTI_KUNITZ INHIBITOR DOMAIN-CONTAINING PROTEIN"/>
    <property type="match status" value="1"/>
</dbReference>
<dbReference type="PANTHER" id="PTHR10083">
    <property type="entry name" value="KUNITZ-TYPE PROTEASE INHIBITOR-RELATED"/>
    <property type="match status" value="1"/>
</dbReference>
<dbReference type="Pfam" id="PF00014">
    <property type="entry name" value="Kunitz_BPTI"/>
    <property type="match status" value="1"/>
</dbReference>
<dbReference type="PRINTS" id="PR00759">
    <property type="entry name" value="BASICPTASE"/>
</dbReference>
<dbReference type="SMART" id="SM00131">
    <property type="entry name" value="KU"/>
    <property type="match status" value="1"/>
</dbReference>
<dbReference type="SUPFAM" id="SSF57362">
    <property type="entry name" value="BPTI-like"/>
    <property type="match status" value="1"/>
</dbReference>
<dbReference type="PROSITE" id="PS00280">
    <property type="entry name" value="BPTI_KUNITZ_1"/>
    <property type="match status" value="1"/>
</dbReference>
<dbReference type="PROSITE" id="PS50279">
    <property type="entry name" value="BPTI_KUNITZ_2"/>
    <property type="match status" value="1"/>
</dbReference>
<comment type="function">
    <text evidence="1">Serine protease inhibitor.</text>
</comment>
<comment type="subcellular location">
    <subcellularLocation>
        <location evidence="1">Secreted</location>
    </subcellularLocation>
</comment>
<comment type="tissue specificity">
    <text>Expressed by the venom gland.</text>
</comment>
<comment type="similarity">
    <text evidence="4">Belongs to the venom Kunitz-type family.</text>
</comment>
<protein>
    <recommendedName>
        <fullName>Kunitz-type serine protease inhibitor vestiginin-3</fullName>
    </recommendedName>
</protein>
<proteinExistence type="evidence at protein level"/>
<name>VKT3_DEMVE</name>
<reference key="1">
    <citation type="journal article" date="2007" name="J. Proteome Res.">
        <title>Diversity of toxic components from the venom of the evolutionarily distinct black whip snake, Demansia vestigiata.</title>
        <authorList>
            <person name="St Pierre L."/>
            <person name="Birrell G.W."/>
            <person name="Earl S.T.H."/>
            <person name="Wallis T.P."/>
            <person name="Gorman J.J."/>
            <person name="de Jersey J."/>
            <person name="Masci P.P."/>
            <person name="Lavin M.F."/>
        </authorList>
    </citation>
    <scope>NUCLEOTIDE SEQUENCE [MRNA]</scope>
    <scope>PROTEIN SEQUENCE OF 56-70</scope>
    <scope>IDENTIFICATION BY MASS SPECTROMETRY</scope>
    <source>
        <tissue>Venom</tissue>
        <tissue>Venom gland</tissue>
    </source>
</reference>
<reference key="2">
    <citation type="journal article" date="2008" name="Cell. Mol. Life Sci.">
        <title>Common evolution of waprin and Kunitz-like toxin families in Australian venomous snakes.</title>
        <authorList>
            <person name="St Pierre L."/>
            <person name="Earl S.T."/>
            <person name="Filippovich I."/>
            <person name="Sorokina N."/>
            <person name="Masci P.P."/>
            <person name="De Jersey J."/>
            <person name="Lavin M.F."/>
        </authorList>
    </citation>
    <scope>NUCLEOTIDE SEQUENCE [GENOMIC DNA]</scope>
    <source>
        <tissue>Venom gland</tissue>
    </source>
</reference>
<accession>A6MFL3</accession>